<gene>
    <name type="primary">porB</name>
</gene>
<reference key="1">
    <citation type="journal article" date="1992" name="FEMS Microbiol. Lett.">
        <title>Sequence analysis and relationships between meningococcal class 3 serotype proteins and other porins from pathogenic and non-pathogenic Neisseria species.</title>
        <authorList>
            <person name="Ward M.J."/>
            <person name="Lambden P.R."/>
            <person name="Heckels J.E."/>
        </authorList>
    </citation>
    <scope>NUCLEOTIDE SEQUENCE [GENOMIC DNA]</scope>
    <source>
        <strain>CCUG 37602 / M1080 / Serogroup B / Serotype 1</strain>
    </source>
</reference>
<keyword id="KW-0998">Cell outer membrane</keyword>
<keyword id="KW-0406">Ion transport</keyword>
<keyword id="KW-0472">Membrane</keyword>
<keyword id="KW-0626">Porin</keyword>
<keyword id="KW-0732">Signal</keyword>
<keyword id="KW-0812">Transmembrane</keyword>
<keyword id="KW-1134">Transmembrane beta strand</keyword>
<keyword id="KW-0813">Transport</keyword>
<sequence>MKKSLIALTLAALPVAAMADVTLYGTIKAGVETSRSVAHNGAQAASVETGTGIVDLGSKIGFKGQEDLGNGLKAIWQVEQKASIAGTDSGWGNRQSFIGLKGGFGKLRVGRLNSVLKDTGDINPWDSKSDYLGVNKIAEPEARLISVRYDSPEFAGLSGSVQYALNDNAGRHNSESYHAGFNYKNGGFFVQYGGAYKRHHQVQENVNIEKYQIHRLVSGYDNDALYASVAVQQQDAKLVEENYSHNSQTEVAATLAYRFGNVTPRVSYAHGFKGSFDATNYNNDYDQVVVGAEYDFSKRTSALVSAGWLQEGKGESKFVSTAGGVGLRHKF</sequence>
<name>OMPB2_NEIMI</name>
<proteinExistence type="inferred from homology"/>
<protein>
    <recommendedName>
        <fullName>Major outer membrane protein P.IB</fullName>
        <shortName>PIB</shortName>
        <shortName>Protein IB</shortName>
    </recommendedName>
    <alternativeName>
        <fullName>Class 3 protein</fullName>
    </alternativeName>
    <alternativeName>
        <fullName>Porin</fullName>
    </alternativeName>
</protein>
<accession>P30687</accession>
<organism>
    <name type="scientific">Neisseria meningitidis serogroup B</name>
    <dbReference type="NCBI Taxonomy" id="491"/>
    <lineage>
        <taxon>Bacteria</taxon>
        <taxon>Pseudomonadati</taxon>
        <taxon>Pseudomonadota</taxon>
        <taxon>Betaproteobacteria</taxon>
        <taxon>Neisseriales</taxon>
        <taxon>Neisseriaceae</taxon>
        <taxon>Neisseria</taxon>
    </lineage>
</organism>
<dbReference type="EMBL" id="X65530">
    <property type="protein sequence ID" value="CAA46500.1"/>
    <property type="molecule type" value="Genomic_DNA"/>
</dbReference>
<dbReference type="PIR" id="S21408">
    <property type="entry name" value="S21408"/>
</dbReference>
<dbReference type="SMR" id="P30687"/>
<dbReference type="TCDB" id="1.B.1.5.4">
    <property type="family name" value="the general bacterial porin (gbp) family"/>
</dbReference>
<dbReference type="GO" id="GO:0009279">
    <property type="term" value="C:cell outer membrane"/>
    <property type="evidence" value="ECO:0007669"/>
    <property type="project" value="UniProtKB-SubCell"/>
</dbReference>
<dbReference type="GO" id="GO:0046930">
    <property type="term" value="C:pore complex"/>
    <property type="evidence" value="ECO:0007669"/>
    <property type="project" value="UniProtKB-KW"/>
</dbReference>
<dbReference type="GO" id="GO:0015288">
    <property type="term" value="F:porin activity"/>
    <property type="evidence" value="ECO:0007669"/>
    <property type="project" value="UniProtKB-KW"/>
</dbReference>
<dbReference type="GO" id="GO:0034220">
    <property type="term" value="P:monoatomic ion transmembrane transport"/>
    <property type="evidence" value="ECO:0007669"/>
    <property type="project" value="InterPro"/>
</dbReference>
<dbReference type="CDD" id="cd00342">
    <property type="entry name" value="gram_neg_porins"/>
    <property type="match status" value="1"/>
</dbReference>
<dbReference type="Gene3D" id="2.40.160.10">
    <property type="entry name" value="Porin"/>
    <property type="match status" value="1"/>
</dbReference>
<dbReference type="InterPro" id="IPR050298">
    <property type="entry name" value="Gram-neg_bact_OMP"/>
</dbReference>
<dbReference type="InterPro" id="IPR033900">
    <property type="entry name" value="Gram_neg_porin_domain"/>
</dbReference>
<dbReference type="InterPro" id="IPR023614">
    <property type="entry name" value="Porin_dom_sf"/>
</dbReference>
<dbReference type="InterPro" id="IPR001702">
    <property type="entry name" value="Porin_Gram-ve"/>
</dbReference>
<dbReference type="InterPro" id="IPR013793">
    <property type="entry name" value="Porin_Gram-ve_CS"/>
</dbReference>
<dbReference type="InterPro" id="IPR002299">
    <property type="entry name" value="Porin_Neis"/>
</dbReference>
<dbReference type="NCBIfam" id="NF040479">
    <property type="entry name" value="porin_porB_Neis"/>
    <property type="match status" value="1"/>
</dbReference>
<dbReference type="PANTHER" id="PTHR34501:SF9">
    <property type="entry name" value="MAJOR OUTER MEMBRANE PROTEIN P.IA"/>
    <property type="match status" value="1"/>
</dbReference>
<dbReference type="PANTHER" id="PTHR34501">
    <property type="entry name" value="PROTEIN YDDL-RELATED"/>
    <property type="match status" value="1"/>
</dbReference>
<dbReference type="Pfam" id="PF00267">
    <property type="entry name" value="Porin_1"/>
    <property type="match status" value="1"/>
</dbReference>
<dbReference type="PRINTS" id="PR00182">
    <property type="entry name" value="ECOLNEIPORIN"/>
</dbReference>
<dbReference type="PRINTS" id="PR00184">
    <property type="entry name" value="NEISSPPORIN"/>
</dbReference>
<dbReference type="SUPFAM" id="SSF56935">
    <property type="entry name" value="Porins"/>
    <property type="match status" value="1"/>
</dbReference>
<dbReference type="PROSITE" id="PS00576">
    <property type="entry name" value="GRAM_NEG_PORIN"/>
    <property type="match status" value="1"/>
</dbReference>
<comment type="function">
    <text>Serves as a slightly cation selective porin.</text>
</comment>
<comment type="subunit">
    <text>Homotrimer.</text>
</comment>
<comment type="subcellular location">
    <subcellularLocation>
        <location>Cell outer membrane</location>
        <topology>Multi-pass membrane protein</topology>
    </subcellularLocation>
</comment>
<comment type="similarity">
    <text evidence="1">Belongs to the Gram-negative porin family.</text>
</comment>
<evidence type="ECO:0000305" key="1"/>
<feature type="signal peptide">
    <location>
        <begin position="1"/>
        <end position="19"/>
    </location>
</feature>
<feature type="chain" id="PRO_0000025282" description="Major outer membrane protein P.IB">
    <location>
        <begin position="20"/>
        <end position="331"/>
    </location>
</feature>